<proteinExistence type="evidence at protein level"/>
<comment type="function">
    <text evidence="2">Effector protein that participates in the suppression of macrophage apoptosis by blocking the extrinsic pathway. Recognizes the host polypyrimidine tract binding protein-associated splicing factor (PSF), which probably leads to its cleavage, diminishing the level of caspase-8 in macrophages.</text>
</comment>
<comment type="subunit">
    <text evidence="2">Interacts with human polypyrimidine tract binding protein-associated splicing factor (PSF).</text>
</comment>
<comment type="subcellular location">
    <subcellularLocation>
        <location evidence="2">Secreted</location>
    </subcellularLocation>
    <subcellularLocation>
        <location evidence="2">Host cytoplasm</location>
    </subcellularLocation>
    <text evidence="2">Is secreted into the macrophage cytoplasm. Might be secreted via a type IV pili apparatus that seems to be encoded in the same operon.</text>
</comment>
<comment type="induction">
    <text evidence="2">Component of the Rv3654c-Rv3660c operon that is highly up-regulated during M.tuberculosis infection of macrophages.</text>
</comment>
<name>API1_MYCTU</name>
<gene>
    <name evidence="4" type="ordered locus">Rv3654c</name>
</gene>
<sequence>MVARHRAQAAADLASLAAAARLPSGLAAACARATLVARAMRVEHAQCRVVDLDVVVTVEVAVAFAGVATATARAGPAKVPTTPG</sequence>
<dbReference type="EMBL" id="AL123456">
    <property type="protein sequence ID" value="CCP46477.1"/>
    <property type="molecule type" value="Genomic_DNA"/>
</dbReference>
<dbReference type="STRING" id="83332.Rv3654c"/>
<dbReference type="PaxDb" id="83332-Rv3654c"/>
<dbReference type="TubercuList" id="Rv3654c"/>
<dbReference type="InParanoid" id="O69622"/>
<dbReference type="Reactome" id="R-HSA-9635465">
    <property type="pathway name" value="Suppression of apoptosis"/>
</dbReference>
<dbReference type="Proteomes" id="UP000001584">
    <property type="component" value="Chromosome"/>
</dbReference>
<dbReference type="GO" id="GO:0005829">
    <property type="term" value="C:cytosol"/>
    <property type="evidence" value="ECO:0000304"/>
    <property type="project" value="Reactome"/>
</dbReference>
<dbReference type="GO" id="GO:0005576">
    <property type="term" value="C:extracellular region"/>
    <property type="evidence" value="ECO:0007669"/>
    <property type="project" value="UniProtKB-SubCell"/>
</dbReference>
<dbReference type="GO" id="GO:0030430">
    <property type="term" value="C:host cell cytoplasm"/>
    <property type="evidence" value="ECO:0007669"/>
    <property type="project" value="UniProtKB-SubCell"/>
</dbReference>
<dbReference type="GO" id="GO:0033668">
    <property type="term" value="P:symbiont-mediated suppression of host apoptosis"/>
    <property type="evidence" value="ECO:0000314"/>
    <property type="project" value="MTBBASE"/>
</dbReference>
<dbReference type="InterPro" id="IPR021202">
    <property type="entry name" value="Rv3654c-like"/>
</dbReference>
<dbReference type="NCBIfam" id="TIGR03816">
    <property type="entry name" value="tadE_like_DECH"/>
    <property type="match status" value="1"/>
</dbReference>
<keyword id="KW-1035">Host cytoplasm</keyword>
<keyword id="KW-1185">Reference proteome</keyword>
<keyword id="KW-0964">Secreted</keyword>
<keyword id="KW-0732">Signal</keyword>
<keyword id="KW-0843">Virulence</keyword>
<accession>O69622</accession>
<organism>
    <name type="scientific">Mycobacterium tuberculosis (strain ATCC 25618 / H37Rv)</name>
    <dbReference type="NCBI Taxonomy" id="83332"/>
    <lineage>
        <taxon>Bacteria</taxon>
        <taxon>Bacillati</taxon>
        <taxon>Actinomycetota</taxon>
        <taxon>Actinomycetes</taxon>
        <taxon>Mycobacteriales</taxon>
        <taxon>Mycobacteriaceae</taxon>
        <taxon>Mycobacterium</taxon>
        <taxon>Mycobacterium tuberculosis complex</taxon>
    </lineage>
</organism>
<evidence type="ECO:0000255" key="1"/>
<evidence type="ECO:0000269" key="2">
    <source>
    </source>
</evidence>
<evidence type="ECO:0000305" key="3">
    <source>
    </source>
</evidence>
<evidence type="ECO:0000312" key="4">
    <source>
        <dbReference type="EMBL" id="CCP46477.1"/>
    </source>
</evidence>
<feature type="signal peptide" evidence="1">
    <location>
        <begin position="1"/>
        <end position="39"/>
    </location>
</feature>
<feature type="chain" id="PRO_0000438183" description="Apoptosis inhibitor Rv3654c">
    <location>
        <begin position="40"/>
        <end position="84"/>
    </location>
</feature>
<protein>
    <recommendedName>
        <fullName evidence="3">Apoptosis inhibitor Rv3654c</fullName>
    </recommendedName>
</protein>
<reference key="1">
    <citation type="journal article" date="1998" name="Nature">
        <title>Deciphering the biology of Mycobacterium tuberculosis from the complete genome sequence.</title>
        <authorList>
            <person name="Cole S.T."/>
            <person name="Brosch R."/>
            <person name="Parkhill J."/>
            <person name="Garnier T."/>
            <person name="Churcher C.M."/>
            <person name="Harris D.E."/>
            <person name="Gordon S.V."/>
            <person name="Eiglmeier K."/>
            <person name="Gas S."/>
            <person name="Barry C.E. III"/>
            <person name="Tekaia F."/>
            <person name="Badcock K."/>
            <person name="Basham D."/>
            <person name="Brown D."/>
            <person name="Chillingworth T."/>
            <person name="Connor R."/>
            <person name="Davies R.M."/>
            <person name="Devlin K."/>
            <person name="Feltwell T."/>
            <person name="Gentles S."/>
            <person name="Hamlin N."/>
            <person name="Holroyd S."/>
            <person name="Hornsby T."/>
            <person name="Jagels K."/>
            <person name="Krogh A."/>
            <person name="McLean J."/>
            <person name="Moule S."/>
            <person name="Murphy L.D."/>
            <person name="Oliver S."/>
            <person name="Osborne J."/>
            <person name="Quail M.A."/>
            <person name="Rajandream M.A."/>
            <person name="Rogers J."/>
            <person name="Rutter S."/>
            <person name="Seeger K."/>
            <person name="Skelton S."/>
            <person name="Squares S."/>
            <person name="Squares R."/>
            <person name="Sulston J.E."/>
            <person name="Taylor K."/>
            <person name="Whitehead S."/>
            <person name="Barrell B.G."/>
        </authorList>
    </citation>
    <scope>NUCLEOTIDE SEQUENCE [LARGE SCALE GENOMIC DNA]</scope>
    <source>
        <strain>ATCC 25618 / H37Rv</strain>
    </source>
</reference>
<reference key="2">
    <citation type="journal article" date="2010" name="PLoS ONE">
        <title>Secreted Mycobacterium tuberculosis Rv3654c and Rv3655c proteins participate in the suppression of macrophage apoptosis.</title>
        <authorList>
            <person name="Danelishvili L."/>
            <person name="Yamazaki Y."/>
            <person name="Selker J."/>
            <person name="Bermudez L.E."/>
        </authorList>
    </citation>
    <scope>FUNCTION</scope>
    <scope>INDUCTION</scope>
    <scope>SUBCELLULAR LOCATION</scope>
    <scope>INTERACTION WITH HUMAN PSF</scope>
    <source>
        <strain>ATCC 25618 / H37Rv</strain>
    </source>
</reference>